<accession>Q54QU0</accession>
<protein>
    <recommendedName>
        <fullName>Calcium-binding protein F-like</fullName>
    </recommendedName>
    <alternativeName>
        <fullName>Calcium-binding protein 12</fullName>
    </alternativeName>
</protein>
<proteinExistence type="predicted"/>
<sequence>MNNNRKIFEEVQNFVQNYDLNKDGSVTSYDIYLSFLKKMNGDVYKASQATGVLCSTIDMDHDGKFTYCEIAKYCVDKAKKQIEQNAEIAALADVEAMLLRFDKDKDKKLSQTEFLEYFKGRGYTPYSDRDQYLKIIDLDKDGCVSVNELQEWFKKRRIDYATMLSARGPNC</sequence>
<organism>
    <name type="scientific">Dictyostelium discoideum</name>
    <name type="common">Social amoeba</name>
    <dbReference type="NCBI Taxonomy" id="44689"/>
    <lineage>
        <taxon>Eukaryota</taxon>
        <taxon>Amoebozoa</taxon>
        <taxon>Evosea</taxon>
        <taxon>Eumycetozoa</taxon>
        <taxon>Dictyostelia</taxon>
        <taxon>Dictyosteliales</taxon>
        <taxon>Dictyosteliaceae</taxon>
        <taxon>Dictyostelium</taxon>
    </lineage>
</organism>
<feature type="chain" id="PRO_0000323770" description="Calcium-binding protein F-like">
    <location>
        <begin position="1"/>
        <end position="171"/>
    </location>
</feature>
<feature type="domain" description="EF-hand 1" evidence="1">
    <location>
        <begin position="6"/>
        <end position="41"/>
    </location>
</feature>
<feature type="domain" description="EF-hand 2" evidence="1">
    <location>
        <begin position="57"/>
        <end position="80"/>
    </location>
</feature>
<feature type="domain" description="EF-hand 3" evidence="1">
    <location>
        <begin position="89"/>
        <end position="124"/>
    </location>
</feature>
<feature type="domain" description="EF-hand 4" evidence="1">
    <location>
        <begin position="130"/>
        <end position="159"/>
    </location>
</feature>
<feature type="binding site" evidence="1">
    <location>
        <position position="19"/>
    </location>
    <ligand>
        <name>Ca(2+)</name>
        <dbReference type="ChEBI" id="CHEBI:29108"/>
        <label>1</label>
    </ligand>
</feature>
<feature type="binding site" evidence="1">
    <location>
        <position position="21"/>
    </location>
    <ligand>
        <name>Ca(2+)</name>
        <dbReference type="ChEBI" id="CHEBI:29108"/>
        <label>1</label>
    </ligand>
</feature>
<feature type="binding site" evidence="1">
    <location>
        <position position="23"/>
    </location>
    <ligand>
        <name>Ca(2+)</name>
        <dbReference type="ChEBI" id="CHEBI:29108"/>
        <label>1</label>
    </ligand>
</feature>
<feature type="binding site" evidence="1">
    <location>
        <position position="25"/>
    </location>
    <ligand>
        <name>Ca(2+)</name>
        <dbReference type="ChEBI" id="CHEBI:29108"/>
        <label>1</label>
    </ligand>
</feature>
<feature type="binding site" evidence="1">
    <location>
        <position position="30"/>
    </location>
    <ligand>
        <name>Ca(2+)</name>
        <dbReference type="ChEBI" id="CHEBI:29108"/>
        <label>1</label>
    </ligand>
</feature>
<feature type="binding site" evidence="1">
    <location>
        <position position="102"/>
    </location>
    <ligand>
        <name>Ca(2+)</name>
        <dbReference type="ChEBI" id="CHEBI:29108"/>
        <label>2</label>
    </ligand>
</feature>
<feature type="binding site" evidence="1">
    <location>
        <position position="104"/>
    </location>
    <ligand>
        <name>Ca(2+)</name>
        <dbReference type="ChEBI" id="CHEBI:29108"/>
        <label>2</label>
    </ligand>
</feature>
<feature type="binding site" evidence="1">
    <location>
        <position position="106"/>
    </location>
    <ligand>
        <name>Ca(2+)</name>
        <dbReference type="ChEBI" id="CHEBI:29108"/>
        <label>2</label>
    </ligand>
</feature>
<feature type="binding site" evidence="1">
    <location>
        <position position="108"/>
    </location>
    <ligand>
        <name>Ca(2+)</name>
        <dbReference type="ChEBI" id="CHEBI:29108"/>
        <label>2</label>
    </ligand>
</feature>
<feature type="binding site" evidence="1">
    <location>
        <position position="113"/>
    </location>
    <ligand>
        <name>Ca(2+)</name>
        <dbReference type="ChEBI" id="CHEBI:29108"/>
        <label>2</label>
    </ligand>
</feature>
<feature type="binding site" evidence="1">
    <location>
        <position position="137"/>
    </location>
    <ligand>
        <name>Ca(2+)</name>
        <dbReference type="ChEBI" id="CHEBI:29108"/>
        <label>3</label>
    </ligand>
</feature>
<feature type="binding site" evidence="1">
    <location>
        <position position="139"/>
    </location>
    <ligand>
        <name>Ca(2+)</name>
        <dbReference type="ChEBI" id="CHEBI:29108"/>
        <label>3</label>
    </ligand>
</feature>
<feature type="binding site" evidence="1">
    <location>
        <position position="141"/>
    </location>
    <ligand>
        <name>Ca(2+)</name>
        <dbReference type="ChEBI" id="CHEBI:29108"/>
        <label>3</label>
    </ligand>
</feature>
<feature type="binding site" evidence="1">
    <location>
        <position position="143"/>
    </location>
    <ligand>
        <name>Ca(2+)</name>
        <dbReference type="ChEBI" id="CHEBI:29108"/>
        <label>3</label>
    </ligand>
</feature>
<feature type="binding site" evidence="1">
    <location>
        <position position="148"/>
    </location>
    <ligand>
        <name>Ca(2+)</name>
        <dbReference type="ChEBI" id="CHEBI:29108"/>
        <label>3</label>
    </ligand>
</feature>
<keyword id="KW-0106">Calcium</keyword>
<keyword id="KW-0479">Metal-binding</keyword>
<keyword id="KW-1185">Reference proteome</keyword>
<keyword id="KW-0677">Repeat</keyword>
<reference key="1">
    <citation type="journal article" date="2005" name="Nature">
        <title>The genome of the social amoeba Dictyostelium discoideum.</title>
        <authorList>
            <person name="Eichinger L."/>
            <person name="Pachebat J.A."/>
            <person name="Gloeckner G."/>
            <person name="Rajandream M.A."/>
            <person name="Sucgang R."/>
            <person name="Berriman M."/>
            <person name="Song J."/>
            <person name="Olsen R."/>
            <person name="Szafranski K."/>
            <person name="Xu Q."/>
            <person name="Tunggal B."/>
            <person name="Kummerfeld S."/>
            <person name="Madera M."/>
            <person name="Konfortov B.A."/>
            <person name="Rivero F."/>
            <person name="Bankier A.T."/>
            <person name="Lehmann R."/>
            <person name="Hamlin N."/>
            <person name="Davies R."/>
            <person name="Gaudet P."/>
            <person name="Fey P."/>
            <person name="Pilcher K."/>
            <person name="Chen G."/>
            <person name="Saunders D."/>
            <person name="Sodergren E.J."/>
            <person name="Davis P."/>
            <person name="Kerhornou A."/>
            <person name="Nie X."/>
            <person name="Hall N."/>
            <person name="Anjard C."/>
            <person name="Hemphill L."/>
            <person name="Bason N."/>
            <person name="Farbrother P."/>
            <person name="Desany B."/>
            <person name="Just E."/>
            <person name="Morio T."/>
            <person name="Rost R."/>
            <person name="Churcher C.M."/>
            <person name="Cooper J."/>
            <person name="Haydock S."/>
            <person name="van Driessche N."/>
            <person name="Cronin A."/>
            <person name="Goodhead I."/>
            <person name="Muzny D.M."/>
            <person name="Mourier T."/>
            <person name="Pain A."/>
            <person name="Lu M."/>
            <person name="Harper D."/>
            <person name="Lindsay R."/>
            <person name="Hauser H."/>
            <person name="James K.D."/>
            <person name="Quiles M."/>
            <person name="Madan Babu M."/>
            <person name="Saito T."/>
            <person name="Buchrieser C."/>
            <person name="Wardroper A."/>
            <person name="Felder M."/>
            <person name="Thangavelu M."/>
            <person name="Johnson D."/>
            <person name="Knights A."/>
            <person name="Loulseged H."/>
            <person name="Mungall K.L."/>
            <person name="Oliver K."/>
            <person name="Price C."/>
            <person name="Quail M.A."/>
            <person name="Urushihara H."/>
            <person name="Hernandez J."/>
            <person name="Rabbinowitsch E."/>
            <person name="Steffen D."/>
            <person name="Sanders M."/>
            <person name="Ma J."/>
            <person name="Kohara Y."/>
            <person name="Sharp S."/>
            <person name="Simmonds M.N."/>
            <person name="Spiegler S."/>
            <person name="Tivey A."/>
            <person name="Sugano S."/>
            <person name="White B."/>
            <person name="Walker D."/>
            <person name="Woodward J.R."/>
            <person name="Winckler T."/>
            <person name="Tanaka Y."/>
            <person name="Shaulsky G."/>
            <person name="Schleicher M."/>
            <person name="Weinstock G.M."/>
            <person name="Rosenthal A."/>
            <person name="Cox E.C."/>
            <person name="Chisholm R.L."/>
            <person name="Gibbs R.A."/>
            <person name="Loomis W.F."/>
            <person name="Platzer M."/>
            <person name="Kay R.R."/>
            <person name="Williams J.G."/>
            <person name="Dear P.H."/>
            <person name="Noegel A.A."/>
            <person name="Barrell B.G."/>
            <person name="Kuspa A."/>
        </authorList>
    </citation>
    <scope>NUCLEOTIDE SEQUENCE [LARGE SCALE GENOMIC DNA]</scope>
    <source>
        <strain>AX4</strain>
    </source>
</reference>
<gene>
    <name type="primary">cbp12</name>
    <name type="ORF">DDB_G0283645</name>
</gene>
<dbReference type="EMBL" id="AAFI02000056">
    <property type="protein sequence ID" value="EAL65589.1"/>
    <property type="molecule type" value="Genomic_DNA"/>
</dbReference>
<dbReference type="RefSeq" id="XP_638933.1">
    <property type="nucleotide sequence ID" value="XM_633841.1"/>
</dbReference>
<dbReference type="SMR" id="Q54QU0"/>
<dbReference type="FunCoup" id="Q54QU0">
    <property type="interactions" value="3"/>
</dbReference>
<dbReference type="STRING" id="44689.Q54QU0"/>
<dbReference type="PaxDb" id="44689-DDB0235288"/>
<dbReference type="EnsemblProtists" id="EAL65589">
    <property type="protein sequence ID" value="EAL65589"/>
    <property type="gene ID" value="DDB_G0283645"/>
</dbReference>
<dbReference type="GeneID" id="8624172"/>
<dbReference type="KEGG" id="ddi:DDB_G0283645"/>
<dbReference type="dictyBase" id="DDB_G0283645"/>
<dbReference type="VEuPathDB" id="AmoebaDB:DDB_G0283645"/>
<dbReference type="HOGENOM" id="CLU_1605758_0_0_1"/>
<dbReference type="InParanoid" id="Q54QU0"/>
<dbReference type="PhylomeDB" id="Q54QU0"/>
<dbReference type="PRO" id="PR:Q54QU0"/>
<dbReference type="Proteomes" id="UP000002195">
    <property type="component" value="Chromosome 4"/>
</dbReference>
<dbReference type="GO" id="GO:0005509">
    <property type="term" value="F:calcium ion binding"/>
    <property type="evidence" value="ECO:0007669"/>
    <property type="project" value="InterPro"/>
</dbReference>
<dbReference type="CDD" id="cd00051">
    <property type="entry name" value="EFh"/>
    <property type="match status" value="1"/>
</dbReference>
<dbReference type="FunFam" id="1.10.238.10:FF:000930">
    <property type="entry name" value="Calcium-binding protein G"/>
    <property type="match status" value="1"/>
</dbReference>
<dbReference type="Gene3D" id="1.10.238.10">
    <property type="entry name" value="EF-hand"/>
    <property type="match status" value="2"/>
</dbReference>
<dbReference type="InterPro" id="IPR011992">
    <property type="entry name" value="EF-hand-dom_pair"/>
</dbReference>
<dbReference type="InterPro" id="IPR018247">
    <property type="entry name" value="EF_Hand_1_Ca_BS"/>
</dbReference>
<dbReference type="InterPro" id="IPR002048">
    <property type="entry name" value="EF_hand_dom"/>
</dbReference>
<dbReference type="PANTHER" id="PTHR10827:SF98">
    <property type="entry name" value="45 KDA CALCIUM-BINDING PROTEIN"/>
    <property type="match status" value="1"/>
</dbReference>
<dbReference type="PANTHER" id="PTHR10827">
    <property type="entry name" value="RETICULOCALBIN"/>
    <property type="match status" value="1"/>
</dbReference>
<dbReference type="Pfam" id="PF13202">
    <property type="entry name" value="EF-hand_5"/>
    <property type="match status" value="1"/>
</dbReference>
<dbReference type="Pfam" id="PF13499">
    <property type="entry name" value="EF-hand_7"/>
    <property type="match status" value="1"/>
</dbReference>
<dbReference type="SMART" id="SM00054">
    <property type="entry name" value="EFh"/>
    <property type="match status" value="2"/>
</dbReference>
<dbReference type="SUPFAM" id="SSF47473">
    <property type="entry name" value="EF-hand"/>
    <property type="match status" value="1"/>
</dbReference>
<dbReference type="PROSITE" id="PS00018">
    <property type="entry name" value="EF_HAND_1"/>
    <property type="match status" value="3"/>
</dbReference>
<dbReference type="PROSITE" id="PS50222">
    <property type="entry name" value="EF_HAND_2"/>
    <property type="match status" value="4"/>
</dbReference>
<name>CBPFL_DICDI</name>
<evidence type="ECO:0000255" key="1">
    <source>
        <dbReference type="PROSITE-ProRule" id="PRU00448"/>
    </source>
</evidence>